<gene>
    <name evidence="6" type="ordered locus">At3g05170</name>
    <name evidence="7" type="ORF">T12H1.14</name>
</gene>
<feature type="chain" id="PRO_0000430635" description="Phosphoglycerate mutase-like protein AT74">
    <location>
        <begin position="1"/>
        <end position="316"/>
    </location>
</feature>
<feature type="region of interest" description="Disordered" evidence="2">
    <location>
        <begin position="275"/>
        <end position="316"/>
    </location>
</feature>
<feature type="compositionally biased region" description="Acidic residues" evidence="2">
    <location>
        <begin position="279"/>
        <end position="291"/>
    </location>
</feature>
<feature type="active site" description="Tele-phosphohistidine intermediate" evidence="1">
    <location>
        <position position="17"/>
    </location>
</feature>
<feature type="active site" description="Proton donor/acceptor" evidence="1">
    <location>
        <position position="106"/>
    </location>
</feature>
<accession>Q9MAA2</accession>
<accession>Q0WMW9</accession>
<evidence type="ECO:0000250" key="1">
    <source>
        <dbReference type="UniProtKB" id="P62707"/>
    </source>
</evidence>
<evidence type="ECO:0000256" key="2">
    <source>
        <dbReference type="SAM" id="MobiDB-lite"/>
    </source>
</evidence>
<evidence type="ECO:0000269" key="3">
    <source>
    </source>
</evidence>
<evidence type="ECO:0000303" key="4">
    <source>
    </source>
</evidence>
<evidence type="ECO:0000305" key="5"/>
<evidence type="ECO:0000312" key="6">
    <source>
        <dbReference type="Araport" id="AT3G05170"/>
    </source>
</evidence>
<evidence type="ECO:0000312" key="7">
    <source>
        <dbReference type="EMBL" id="AAF27023.1"/>
    </source>
</evidence>
<proteinExistence type="evidence at transcript level"/>
<organism>
    <name type="scientific">Arabidopsis thaliana</name>
    <name type="common">Mouse-ear cress</name>
    <dbReference type="NCBI Taxonomy" id="3702"/>
    <lineage>
        <taxon>Eukaryota</taxon>
        <taxon>Viridiplantae</taxon>
        <taxon>Streptophyta</taxon>
        <taxon>Embryophyta</taxon>
        <taxon>Tracheophyta</taxon>
        <taxon>Spermatophyta</taxon>
        <taxon>Magnoliopsida</taxon>
        <taxon>eudicotyledons</taxon>
        <taxon>Gunneridae</taxon>
        <taxon>Pentapetalae</taxon>
        <taxon>rosids</taxon>
        <taxon>malvids</taxon>
        <taxon>Brassicales</taxon>
        <taxon>Brassicaceae</taxon>
        <taxon>Camelineae</taxon>
        <taxon>Arabidopsis</taxon>
    </lineage>
</organism>
<keyword id="KW-1185">Reference proteome</keyword>
<reference key="1">
    <citation type="journal article" date="2000" name="Nature">
        <title>Sequence and analysis of chromosome 3 of the plant Arabidopsis thaliana.</title>
        <authorList>
            <person name="Salanoubat M."/>
            <person name="Lemcke K."/>
            <person name="Rieger M."/>
            <person name="Ansorge W."/>
            <person name="Unseld M."/>
            <person name="Fartmann B."/>
            <person name="Valle G."/>
            <person name="Bloecker H."/>
            <person name="Perez-Alonso M."/>
            <person name="Obermaier B."/>
            <person name="Delseny M."/>
            <person name="Boutry M."/>
            <person name="Grivell L.A."/>
            <person name="Mache R."/>
            <person name="Puigdomenech P."/>
            <person name="De Simone V."/>
            <person name="Choisne N."/>
            <person name="Artiguenave F."/>
            <person name="Robert C."/>
            <person name="Brottier P."/>
            <person name="Wincker P."/>
            <person name="Cattolico L."/>
            <person name="Weissenbach J."/>
            <person name="Saurin W."/>
            <person name="Quetier F."/>
            <person name="Schaefer M."/>
            <person name="Mueller-Auer S."/>
            <person name="Gabel C."/>
            <person name="Fuchs M."/>
            <person name="Benes V."/>
            <person name="Wurmbach E."/>
            <person name="Drzonek H."/>
            <person name="Erfle H."/>
            <person name="Jordan N."/>
            <person name="Bangert S."/>
            <person name="Wiedelmann R."/>
            <person name="Kranz H."/>
            <person name="Voss H."/>
            <person name="Holland R."/>
            <person name="Brandt P."/>
            <person name="Nyakatura G."/>
            <person name="Vezzi A."/>
            <person name="D'Angelo M."/>
            <person name="Pallavicini A."/>
            <person name="Toppo S."/>
            <person name="Simionati B."/>
            <person name="Conrad A."/>
            <person name="Hornischer K."/>
            <person name="Kauer G."/>
            <person name="Loehnert T.-H."/>
            <person name="Nordsiek G."/>
            <person name="Reichelt J."/>
            <person name="Scharfe M."/>
            <person name="Schoen O."/>
            <person name="Bargues M."/>
            <person name="Terol J."/>
            <person name="Climent J."/>
            <person name="Navarro P."/>
            <person name="Collado C."/>
            <person name="Perez-Perez A."/>
            <person name="Ottenwaelder B."/>
            <person name="Duchemin D."/>
            <person name="Cooke R."/>
            <person name="Laudie M."/>
            <person name="Berger-Llauro C."/>
            <person name="Purnelle B."/>
            <person name="Masuy D."/>
            <person name="de Haan M."/>
            <person name="Maarse A.C."/>
            <person name="Alcaraz J.-P."/>
            <person name="Cottet A."/>
            <person name="Casacuberta E."/>
            <person name="Monfort A."/>
            <person name="Argiriou A."/>
            <person name="Flores M."/>
            <person name="Liguori R."/>
            <person name="Vitale D."/>
            <person name="Mannhaupt G."/>
            <person name="Haase D."/>
            <person name="Schoof H."/>
            <person name="Rudd S."/>
            <person name="Zaccaria P."/>
            <person name="Mewes H.-W."/>
            <person name="Mayer K.F.X."/>
            <person name="Kaul S."/>
            <person name="Town C.D."/>
            <person name="Koo H.L."/>
            <person name="Tallon L.J."/>
            <person name="Jenkins J."/>
            <person name="Rooney T."/>
            <person name="Rizzo M."/>
            <person name="Walts A."/>
            <person name="Utterback T."/>
            <person name="Fujii C.Y."/>
            <person name="Shea T.P."/>
            <person name="Creasy T.H."/>
            <person name="Haas B."/>
            <person name="Maiti R."/>
            <person name="Wu D."/>
            <person name="Peterson J."/>
            <person name="Van Aken S."/>
            <person name="Pai G."/>
            <person name="Militscher J."/>
            <person name="Sellers P."/>
            <person name="Gill J.E."/>
            <person name="Feldblyum T.V."/>
            <person name="Preuss D."/>
            <person name="Lin X."/>
            <person name="Nierman W.C."/>
            <person name="Salzberg S.L."/>
            <person name="White O."/>
            <person name="Venter J.C."/>
            <person name="Fraser C.M."/>
            <person name="Kaneko T."/>
            <person name="Nakamura Y."/>
            <person name="Sato S."/>
            <person name="Kato T."/>
            <person name="Asamizu E."/>
            <person name="Sasamoto S."/>
            <person name="Kimura T."/>
            <person name="Idesawa K."/>
            <person name="Kawashima K."/>
            <person name="Kishida Y."/>
            <person name="Kiyokawa C."/>
            <person name="Kohara M."/>
            <person name="Matsumoto M."/>
            <person name="Matsuno A."/>
            <person name="Muraki A."/>
            <person name="Nakayama S."/>
            <person name="Nakazaki N."/>
            <person name="Shinpo S."/>
            <person name="Takeuchi C."/>
            <person name="Wada T."/>
            <person name="Watanabe A."/>
            <person name="Yamada M."/>
            <person name="Yasuda M."/>
            <person name="Tabata S."/>
        </authorList>
    </citation>
    <scope>NUCLEOTIDE SEQUENCE [LARGE SCALE GENOMIC DNA]</scope>
    <source>
        <strain>cv. Columbia</strain>
    </source>
</reference>
<reference key="2">
    <citation type="journal article" date="2017" name="Plant J.">
        <title>Araport11: a complete reannotation of the Arabidopsis thaliana reference genome.</title>
        <authorList>
            <person name="Cheng C.Y."/>
            <person name="Krishnakumar V."/>
            <person name="Chan A.P."/>
            <person name="Thibaud-Nissen F."/>
            <person name="Schobel S."/>
            <person name="Town C.D."/>
        </authorList>
    </citation>
    <scope>GENOME REANNOTATION</scope>
    <source>
        <strain>cv. Columbia</strain>
    </source>
</reference>
<reference key="3">
    <citation type="submission" date="2006-07" db="EMBL/GenBank/DDBJ databases">
        <title>Large-scale analysis of RIKEN Arabidopsis full-length (RAFL) cDNAs.</title>
        <authorList>
            <person name="Totoki Y."/>
            <person name="Seki M."/>
            <person name="Ishida J."/>
            <person name="Nakajima M."/>
            <person name="Enju A."/>
            <person name="Kamiya A."/>
            <person name="Narusaka M."/>
            <person name="Shin-i T."/>
            <person name="Nakagawa M."/>
            <person name="Sakamoto N."/>
            <person name="Oishi K."/>
            <person name="Kohara Y."/>
            <person name="Kobayashi M."/>
            <person name="Toyoda A."/>
            <person name="Sakaki Y."/>
            <person name="Sakurai T."/>
            <person name="Iida K."/>
            <person name="Akiyama K."/>
            <person name="Satou M."/>
            <person name="Toyoda T."/>
            <person name="Konagaya A."/>
            <person name="Carninci P."/>
            <person name="Kawai J."/>
            <person name="Hayashizaki Y."/>
            <person name="Shinozaki K."/>
        </authorList>
    </citation>
    <scope>NUCLEOTIDE SEQUENCE [LARGE SCALE MRNA] OF 1-284</scope>
    <source>
        <strain>cv. Columbia</strain>
    </source>
</reference>
<reference key="4">
    <citation type="journal article" date="2005" name="J. Exp. Bot.">
        <title>Characterization and functional investigation of an Arabidopsis cDNA encoding a homologue to the d-PGMase superfamily.</title>
        <authorList>
            <person name="Bourgis F."/>
            <person name="Botha F.C."/>
            <person name="Mani S."/>
            <person name="Hiten F.N."/>
            <person name="Rigden D.J."/>
            <person name="Verbruggen N."/>
        </authorList>
    </citation>
    <scope>FUNCTION</scope>
    <scope>TISSUE SPECIFICITY</scope>
    <scope>INDUCTION BY SUCROSE</scope>
</reference>
<comment type="function">
    <text evidence="3">Phosphoglycerate mutase-like protein lacking PGM activity. May play a role in carbohydrates metabolism.</text>
</comment>
<comment type="tissue specificity">
    <text evidence="3">Expressed in roots, leaves, stems, flowers and siliques.</text>
</comment>
<comment type="induction">
    <text evidence="3">By sucrose.</text>
</comment>
<comment type="similarity">
    <text evidence="5">Belongs to the phosphoglycerate mutase family.</text>
</comment>
<dbReference type="EMBL" id="AC009177">
    <property type="protein sequence ID" value="AAF27023.1"/>
    <property type="molecule type" value="Genomic_DNA"/>
</dbReference>
<dbReference type="EMBL" id="CP002686">
    <property type="protein sequence ID" value="AEE74200.1"/>
    <property type="molecule type" value="Genomic_DNA"/>
</dbReference>
<dbReference type="EMBL" id="AK229691">
    <property type="protein sequence ID" value="BAF01531.1"/>
    <property type="molecule type" value="mRNA"/>
</dbReference>
<dbReference type="RefSeq" id="NP_187168.1">
    <property type="nucleotide sequence ID" value="NM_111390.2"/>
</dbReference>
<dbReference type="SMR" id="Q9MAA2"/>
<dbReference type="FunCoup" id="Q9MAA2">
    <property type="interactions" value="107"/>
</dbReference>
<dbReference type="STRING" id="3702.Q9MAA2"/>
<dbReference type="PaxDb" id="3702-AT3G05170.1"/>
<dbReference type="ProteomicsDB" id="246825"/>
<dbReference type="EnsemblPlants" id="AT3G05170.1">
    <property type="protein sequence ID" value="AT3G05170.1"/>
    <property type="gene ID" value="AT3G05170"/>
</dbReference>
<dbReference type="GeneID" id="819681"/>
<dbReference type="Gramene" id="AT3G05170.1">
    <property type="protein sequence ID" value="AT3G05170.1"/>
    <property type="gene ID" value="AT3G05170"/>
</dbReference>
<dbReference type="KEGG" id="ath:AT3G05170"/>
<dbReference type="Araport" id="AT3G05170"/>
<dbReference type="TAIR" id="AT3G05170"/>
<dbReference type="eggNOG" id="ENOG502QTHF">
    <property type="taxonomic scope" value="Eukaryota"/>
</dbReference>
<dbReference type="HOGENOM" id="CLU_033323_3_2_1"/>
<dbReference type="InParanoid" id="Q9MAA2"/>
<dbReference type="OMA" id="YSVTPDY"/>
<dbReference type="PhylomeDB" id="Q9MAA2"/>
<dbReference type="PRO" id="PR:Q9MAA2"/>
<dbReference type="Proteomes" id="UP000006548">
    <property type="component" value="Chromosome 3"/>
</dbReference>
<dbReference type="ExpressionAtlas" id="Q9MAA2">
    <property type="expression patterns" value="baseline and differential"/>
</dbReference>
<dbReference type="GO" id="GO:0003824">
    <property type="term" value="F:catalytic activity"/>
    <property type="evidence" value="ECO:0007669"/>
    <property type="project" value="InterPro"/>
</dbReference>
<dbReference type="GO" id="GO:0005975">
    <property type="term" value="P:carbohydrate metabolic process"/>
    <property type="evidence" value="ECO:0000304"/>
    <property type="project" value="UniProtKB"/>
</dbReference>
<dbReference type="CDD" id="cd07067">
    <property type="entry name" value="HP_PGM_like"/>
    <property type="match status" value="1"/>
</dbReference>
<dbReference type="FunFam" id="3.40.50.1240:FF:000043">
    <property type="entry name" value="Phosphoglycerate mutase"/>
    <property type="match status" value="1"/>
</dbReference>
<dbReference type="Gene3D" id="3.40.50.1240">
    <property type="entry name" value="Phosphoglycerate mutase-like"/>
    <property type="match status" value="1"/>
</dbReference>
<dbReference type="InterPro" id="IPR013078">
    <property type="entry name" value="His_Pase_superF_clade-1"/>
</dbReference>
<dbReference type="InterPro" id="IPR029033">
    <property type="entry name" value="His_PPase_superfam"/>
</dbReference>
<dbReference type="InterPro" id="IPR001345">
    <property type="entry name" value="PG/BPGM_mutase_AS"/>
</dbReference>
<dbReference type="InterPro" id="IPR052765">
    <property type="entry name" value="PGM-Related"/>
</dbReference>
<dbReference type="PANTHER" id="PTHR46192">
    <property type="entry name" value="BROAD-RANGE ACID PHOSPHATASE DET1"/>
    <property type="match status" value="1"/>
</dbReference>
<dbReference type="Pfam" id="PF00300">
    <property type="entry name" value="His_Phos_1"/>
    <property type="match status" value="1"/>
</dbReference>
<dbReference type="SMART" id="SM00855">
    <property type="entry name" value="PGAM"/>
    <property type="match status" value="1"/>
</dbReference>
<dbReference type="SUPFAM" id="SSF53254">
    <property type="entry name" value="Phosphoglycerate mutase-like"/>
    <property type="match status" value="1"/>
</dbReference>
<dbReference type="PROSITE" id="PS00175">
    <property type="entry name" value="PG_MUTASE"/>
    <property type="match status" value="1"/>
</dbReference>
<protein>
    <recommendedName>
        <fullName evidence="5">Phosphoglycerate mutase-like protein AT74</fullName>
        <shortName evidence="4">At-74</shortName>
    </recommendedName>
</protein>
<sequence length="316" mass="36880">MSPDNKLLPKRIILVRHGESEGNLDTAAYTTTPDHKIQLTDSGLLQAQEAGARLHALISSNPSSPEWRVYFYVSPYDRTRSTLREIGRSFSRRRVIGVREECRIREQDFGNFQVKERMRATKKVRERFGRFFYRFPEGESAADVFDRVSSFLESLWRDIDMNRLHINPSHELNFVIVSHGLTSRVFLMKWFKWSVEQFEGLNNPGNSEIRVMELGQGGDYSLAIHHTEEELATWGLSPEMIADQKWRANAHKGEWKEDCKWYFGDFFDHMADSDKECETEATEDREEEEEEEGKRVNLLTSSEYSNEPELYNGQCC</sequence>
<name>AT74_ARATH</name>